<sequence length="84" mass="9584">MFMADAYFADTVWYVGQIIFIVAICLLVIIVVVAFLATFKLCIQLCGMCNTLVLSPSIYVFNRGRQFYEFYNDVKPPVLDVDDV</sequence>
<proteinExistence type="inferred from homology"/>
<organism>
    <name type="scientific">Bovine coronavirus (strain Ontario)</name>
    <name type="common">BCoV</name>
    <name type="synonym">BCV</name>
    <dbReference type="NCBI Taxonomy" id="231422"/>
    <lineage>
        <taxon>Viruses</taxon>
        <taxon>Riboviria</taxon>
        <taxon>Orthornavirae</taxon>
        <taxon>Pisuviricota</taxon>
        <taxon>Pisoniviricetes</taxon>
        <taxon>Nidovirales</taxon>
        <taxon>Cornidovirineae</taxon>
        <taxon>Coronaviridae</taxon>
        <taxon>Orthocoronavirinae</taxon>
        <taxon>Betacoronavirus</taxon>
        <taxon>Embecovirus</taxon>
        <taxon>Betacoronavirus 1</taxon>
    </lineage>
</organism>
<organismHost>
    <name type="scientific">Bos taurus</name>
    <name type="common">Bovine</name>
    <dbReference type="NCBI Taxonomy" id="9913"/>
</organismHost>
<name>VEMP_CVBON</name>
<evidence type="ECO:0000255" key="1">
    <source>
        <dbReference type="HAMAP-Rule" id="MF_04204"/>
    </source>
</evidence>
<dbReference type="EMBL" id="AH010241">
    <property type="protein sequence ID" value="AAG60548.1"/>
    <property type="molecule type" value="Genomic_RNA"/>
</dbReference>
<dbReference type="EMBL" id="AH010063">
    <property type="protein sequence ID" value="AAG40627.1"/>
    <property type="molecule type" value="Genomic_DNA"/>
</dbReference>
<dbReference type="RefSeq" id="NP_150081.1">
    <property type="nucleotide sequence ID" value="NC_003045.1"/>
</dbReference>
<dbReference type="GeneID" id="921685"/>
<dbReference type="KEGG" id="vg:921685"/>
<dbReference type="GO" id="GO:0044178">
    <property type="term" value="C:host cell Golgi membrane"/>
    <property type="evidence" value="ECO:0007669"/>
    <property type="project" value="UniProtKB-SubCell"/>
</dbReference>
<dbReference type="GO" id="GO:0016020">
    <property type="term" value="C:membrane"/>
    <property type="evidence" value="ECO:0007669"/>
    <property type="project" value="UniProtKB-UniRule"/>
</dbReference>
<dbReference type="GO" id="GO:0140975">
    <property type="term" value="P:disruption of cellular anatomical structure in another organism"/>
    <property type="evidence" value="ECO:0007669"/>
    <property type="project" value="UniProtKB-UniRule"/>
</dbReference>
<dbReference type="GO" id="GO:0046760">
    <property type="term" value="P:viral budding from Golgi membrane"/>
    <property type="evidence" value="ECO:0007669"/>
    <property type="project" value="UniProtKB-UniRule"/>
</dbReference>
<dbReference type="CDD" id="cd21532">
    <property type="entry name" value="HKU1-CoV-like_E"/>
    <property type="match status" value="1"/>
</dbReference>
<dbReference type="HAMAP" id="MF_04204">
    <property type="entry name" value="BETA_CORONA_E"/>
    <property type="match status" value="1"/>
</dbReference>
<dbReference type="InterPro" id="IPR043506">
    <property type="entry name" value="E_protein_bCoV"/>
</dbReference>
<dbReference type="InterPro" id="IPR003873">
    <property type="entry name" value="E_protein_CoV"/>
</dbReference>
<dbReference type="Pfam" id="PF02723">
    <property type="entry name" value="CoV_E"/>
    <property type="match status" value="1"/>
</dbReference>
<dbReference type="PROSITE" id="PS51926">
    <property type="entry name" value="COV_E"/>
    <property type="match status" value="1"/>
</dbReference>
<gene>
    <name evidence="1" type="primary">E</name>
    <name type="synonym">sM</name>
    <name type="ORF">5b</name>
</gene>
<comment type="function">
    <text evidence="1">Plays a central role in virus morphogenesis and assembly. Acts as a viroporin and self-assembles in host membranes forming pentameric protein-lipid pores that allow ion transport. Also plays a role in the induction of apoptosis.</text>
</comment>
<comment type="subunit">
    <text evidence="1">Homopentamer. Interacts with membrane protein M in the budding compartment of the host cell, which is located between endoplasmic reticulum and the Golgi complex. Interacts with Nucleoprotein.</text>
</comment>
<comment type="subcellular location">
    <subcellularLocation>
        <location evidence="1">Host Golgi apparatus membrane</location>
        <topology evidence="1">Single-pass type III membrane protein</topology>
    </subcellularLocation>
    <text evidence="1">The cytoplasmic tail functions as a Golgi complex-targeting signal.</text>
</comment>
<comment type="similarity">
    <text evidence="1">Belongs to the betacoronaviruses E protein family.</text>
</comment>
<reference key="1">
    <citation type="journal article" date="2001" name="Virus Res.">
        <title>Bovine coronaviruses associated with enteric and respiratory diseases in Canadian dairy cattle display different reactivities to anti-HE monoclonal antibodies and distinct amino acid changes in their HE, S and ns4.9 protein.</title>
        <authorList>
            <person name="Gelinas A.-M."/>
            <person name="Boutin M."/>
            <person name="Sasseville A.M.-J."/>
            <person name="Dea S."/>
        </authorList>
    </citation>
    <scope>NUCLEOTIDE SEQUENCE [GENOMIC RNA]</scope>
    <source>
        <strain>Isolate BCO.43277</strain>
        <strain>Isolate BCO.44175</strain>
    </source>
</reference>
<keyword id="KW-0053">Apoptosis</keyword>
<keyword id="KW-1040">Host Golgi apparatus</keyword>
<keyword id="KW-1043">Host membrane</keyword>
<keyword id="KW-0472">Membrane</keyword>
<keyword id="KW-0812">Transmembrane</keyword>
<keyword id="KW-1133">Transmembrane helix</keyword>
<feature type="chain" id="PRO_0000283972" description="Envelope small membrane protein">
    <location>
        <begin position="1"/>
        <end position="84"/>
    </location>
</feature>
<feature type="topological domain" description="Virion surface" evidence="1">
    <location>
        <begin position="1"/>
        <end position="18"/>
    </location>
</feature>
<feature type="transmembrane region" description="Helical" evidence="1">
    <location>
        <begin position="19"/>
        <end position="39"/>
    </location>
</feature>
<feature type="topological domain" description="Intravirion" evidence="1">
    <location>
        <begin position="40"/>
        <end position="80"/>
    </location>
</feature>
<accession>P0C2Q6</accession>
<accession>Q77N11</accession>
<accession>Q77WX9</accession>
<protein>
    <recommendedName>
        <fullName evidence="1">Envelope small membrane protein</fullName>
        <shortName evidence="1">E protein</shortName>
        <shortName evidence="1">sM protein</shortName>
    </recommendedName>
</protein>